<reference key="1">
    <citation type="journal article" date="2002" name="J. Bacteriol.">
        <title>Microviridae, a family divided: isolation, characterization, and genome sequence of phiMH2K, a bacteriophage of the obligate intracellular parasitic bacterium Bdellovibrio bacteriovorus.</title>
        <authorList>
            <person name="Brentlinger K.L."/>
            <person name="Hafenstein S."/>
            <person name="Novak C.R."/>
            <person name="Fane B.A."/>
            <person name="Borgon R."/>
            <person name="McKenna R."/>
            <person name="Agbandje-McKenna M."/>
        </authorList>
    </citation>
    <scope>NUCLEOTIDE SEQUENCE [GENOMIC DNA]</scope>
</reference>
<gene>
    <name type="ORF">ORF3</name>
</gene>
<organismHost>
    <name type="scientific">Bdellovibrio bacteriovorus</name>
    <dbReference type="NCBI Taxonomy" id="959"/>
</organismHost>
<accession>Q9G053</accession>
<evidence type="ECO:0000250" key="1"/>
<evidence type="ECO:0000256" key="2">
    <source>
        <dbReference type="SAM" id="MobiDB-lite"/>
    </source>
</evidence>
<evidence type="ECO:0000305" key="3"/>
<comment type="function">
    <text evidence="1">Participates in the assembly of the viral procapsid in the cytoplasm. Internal scaffolding protein VP3 is released from the procapsid upon genome packaging, possibly through affinity displacement by the protein VP8, or by proteolysis (By similarity).</text>
</comment>
<comment type="subcellular location">
    <subcellularLocation>
        <location evidence="1">Host cytoplasm</location>
    </subcellularLocation>
</comment>
<comment type="similarity">
    <text evidence="3">Belongs to the microvidae B protein family.</text>
</comment>
<organism>
    <name type="scientific">Bdellovibrio phage phiMH2K</name>
    <name type="common">Bacteriophage phiMH2K</name>
    <dbReference type="NCBI Taxonomy" id="145579"/>
    <lineage>
        <taxon>Viruses</taxon>
        <taxon>Monodnaviria</taxon>
        <taxon>Sangervirae</taxon>
        <taxon>Phixviricota</taxon>
        <taxon>Malgrandaviricetes</taxon>
        <taxon>Petitvirales</taxon>
        <taxon>Microviridae</taxon>
        <taxon>Gokushovirinae</taxon>
        <taxon>Bdellomicrovirus</taxon>
        <taxon>Bdellomicrovirus MH2K</taxon>
    </lineage>
</organism>
<keyword id="KW-1035">Host cytoplasm</keyword>
<keyword id="KW-1185">Reference proteome</keyword>
<keyword id="KW-0118">Viral capsid assembly</keyword>
<keyword id="KW-1188">Viral release from host cell</keyword>
<name>B_BPPHM</name>
<sequence length="151" mass="16906">MKKIELRPNGTKLVHTVNELPPETDQSFGKECDINFIVKKFIKTGQITHLARRQGFYGDQSSIPDFQTAMDTVTKAQQAFDELPAHMRKRFANSPHELMQFLQDPKNRDEAISLGLMEMVETPQQAPQSTTNQTTTKPAPASGEPTPVPTP</sequence>
<dbReference type="EMBL" id="AF306496">
    <property type="protein sequence ID" value="AAG45346.1"/>
    <property type="molecule type" value="Genomic_DNA"/>
</dbReference>
<dbReference type="RefSeq" id="NP_073544.1">
    <property type="nucleotide sequence ID" value="NC_002643.1"/>
</dbReference>
<dbReference type="KEGG" id="vg:918746"/>
<dbReference type="OrthoDB" id="12051at10239"/>
<dbReference type="Proteomes" id="UP000002418">
    <property type="component" value="Genome"/>
</dbReference>
<dbReference type="GO" id="GO:0030430">
    <property type="term" value="C:host cell cytoplasm"/>
    <property type="evidence" value="ECO:0007669"/>
    <property type="project" value="UniProtKB-SubCell"/>
</dbReference>
<dbReference type="InterPro" id="IPR014131">
    <property type="entry name" value="Chlamydia_phage_Vp3"/>
</dbReference>
<dbReference type="Pfam" id="PF09675">
    <property type="entry name" value="Chlamy_scaf"/>
    <property type="match status" value="1"/>
</dbReference>
<proteinExistence type="inferred from homology"/>
<protein>
    <recommendedName>
        <fullName>Internal scaffolding protein VP3</fullName>
    </recommendedName>
</protein>
<feature type="chain" id="PRO_0000372065" description="Internal scaffolding protein VP3">
    <location>
        <begin position="1"/>
        <end position="151"/>
    </location>
</feature>
<feature type="region of interest" description="Disordered" evidence="2">
    <location>
        <begin position="120"/>
        <end position="151"/>
    </location>
</feature>
<feature type="compositionally biased region" description="Polar residues" evidence="2">
    <location>
        <begin position="122"/>
        <end position="137"/>
    </location>
</feature>